<comment type="function">
    <text evidence="1">Catalyzes the reversible formation of acyl-phosphate (acyl-PO(4)) from acyl-[acyl-carrier-protein] (acyl-ACP). This enzyme utilizes acyl-ACP as fatty acyl donor, but not acyl-CoA.</text>
</comment>
<comment type="catalytic activity">
    <reaction evidence="1">
        <text>a fatty acyl-[ACP] + phosphate = an acyl phosphate + holo-[ACP]</text>
        <dbReference type="Rhea" id="RHEA:42292"/>
        <dbReference type="Rhea" id="RHEA-COMP:9685"/>
        <dbReference type="Rhea" id="RHEA-COMP:14125"/>
        <dbReference type="ChEBI" id="CHEBI:43474"/>
        <dbReference type="ChEBI" id="CHEBI:59918"/>
        <dbReference type="ChEBI" id="CHEBI:64479"/>
        <dbReference type="ChEBI" id="CHEBI:138651"/>
        <dbReference type="EC" id="2.3.1.274"/>
    </reaction>
</comment>
<comment type="pathway">
    <text evidence="1">Lipid metabolism; phospholipid metabolism.</text>
</comment>
<comment type="subunit">
    <text evidence="1">Homodimer. Probably interacts with PlsY.</text>
</comment>
<comment type="subcellular location">
    <subcellularLocation>
        <location evidence="1">Cytoplasm</location>
    </subcellularLocation>
    <text evidence="1">Associated with the membrane possibly through PlsY.</text>
</comment>
<comment type="similarity">
    <text evidence="1">Belongs to the PlsX family.</text>
</comment>
<gene>
    <name evidence="1" type="primary">plsX</name>
    <name type="ordered locus">LVIS_0954</name>
</gene>
<feature type="chain" id="PRO_0000329234" description="Phosphate acyltransferase">
    <location>
        <begin position="1"/>
        <end position="345"/>
    </location>
</feature>
<proteinExistence type="inferred from homology"/>
<accession>Q03RT4</accession>
<reference key="1">
    <citation type="journal article" date="2006" name="Proc. Natl. Acad. Sci. U.S.A.">
        <title>Comparative genomics of the lactic acid bacteria.</title>
        <authorList>
            <person name="Makarova K.S."/>
            <person name="Slesarev A."/>
            <person name="Wolf Y.I."/>
            <person name="Sorokin A."/>
            <person name="Mirkin B."/>
            <person name="Koonin E.V."/>
            <person name="Pavlov A."/>
            <person name="Pavlova N."/>
            <person name="Karamychev V."/>
            <person name="Polouchine N."/>
            <person name="Shakhova V."/>
            <person name="Grigoriev I."/>
            <person name="Lou Y."/>
            <person name="Rohksar D."/>
            <person name="Lucas S."/>
            <person name="Huang K."/>
            <person name="Goodstein D.M."/>
            <person name="Hawkins T."/>
            <person name="Plengvidhya V."/>
            <person name="Welker D."/>
            <person name="Hughes J."/>
            <person name="Goh Y."/>
            <person name="Benson A."/>
            <person name="Baldwin K."/>
            <person name="Lee J.-H."/>
            <person name="Diaz-Muniz I."/>
            <person name="Dosti B."/>
            <person name="Smeianov V."/>
            <person name="Wechter W."/>
            <person name="Barabote R."/>
            <person name="Lorca G."/>
            <person name="Altermann E."/>
            <person name="Barrangou R."/>
            <person name="Ganesan B."/>
            <person name="Xie Y."/>
            <person name="Rawsthorne H."/>
            <person name="Tamir D."/>
            <person name="Parker C."/>
            <person name="Breidt F."/>
            <person name="Broadbent J.R."/>
            <person name="Hutkins R."/>
            <person name="O'Sullivan D."/>
            <person name="Steele J."/>
            <person name="Unlu G."/>
            <person name="Saier M.H. Jr."/>
            <person name="Klaenhammer T."/>
            <person name="Richardson P."/>
            <person name="Kozyavkin S."/>
            <person name="Weimer B.C."/>
            <person name="Mills D.A."/>
        </authorList>
    </citation>
    <scope>NUCLEOTIDE SEQUENCE [LARGE SCALE GENOMIC DNA]</scope>
    <source>
        <strain>ATCC 367 / BCRC 12310 / CIP 105137 / JCM 1170 / LMG 11437 / NCIMB 947 / NCTC 947</strain>
    </source>
</reference>
<name>PLSX_LEVBA</name>
<organism>
    <name type="scientific">Levilactobacillus brevis (strain ATCC 367 / BCRC 12310 / CIP 105137 / JCM 1170 / LMG 11437 / NCIMB 947 / NCTC 947)</name>
    <name type="common">Lactobacillus brevis</name>
    <dbReference type="NCBI Taxonomy" id="387344"/>
    <lineage>
        <taxon>Bacteria</taxon>
        <taxon>Bacillati</taxon>
        <taxon>Bacillota</taxon>
        <taxon>Bacilli</taxon>
        <taxon>Lactobacillales</taxon>
        <taxon>Lactobacillaceae</taxon>
        <taxon>Levilactobacillus</taxon>
    </lineage>
</organism>
<dbReference type="EC" id="2.3.1.274" evidence="1"/>
<dbReference type="EMBL" id="CP000416">
    <property type="protein sequence ID" value="ABJ64088.1"/>
    <property type="molecule type" value="Genomic_DNA"/>
</dbReference>
<dbReference type="RefSeq" id="WP_011667678.1">
    <property type="nucleotide sequence ID" value="NC_008497.1"/>
</dbReference>
<dbReference type="SMR" id="Q03RT4"/>
<dbReference type="STRING" id="387344.LVIS_0954"/>
<dbReference type="KEGG" id="lbr:LVIS_0954"/>
<dbReference type="PATRIC" id="fig|387344.15.peg.930"/>
<dbReference type="eggNOG" id="COG0416">
    <property type="taxonomic scope" value="Bacteria"/>
</dbReference>
<dbReference type="HOGENOM" id="CLU_039379_1_1_9"/>
<dbReference type="UniPathway" id="UPA00085"/>
<dbReference type="Proteomes" id="UP000001652">
    <property type="component" value="Chromosome"/>
</dbReference>
<dbReference type="GO" id="GO:0005737">
    <property type="term" value="C:cytoplasm"/>
    <property type="evidence" value="ECO:0007669"/>
    <property type="project" value="UniProtKB-SubCell"/>
</dbReference>
<dbReference type="GO" id="GO:0043811">
    <property type="term" value="F:phosphate:acyl-[acyl carrier protein] acyltransferase activity"/>
    <property type="evidence" value="ECO:0007669"/>
    <property type="project" value="UniProtKB-UniRule"/>
</dbReference>
<dbReference type="GO" id="GO:0006633">
    <property type="term" value="P:fatty acid biosynthetic process"/>
    <property type="evidence" value="ECO:0007669"/>
    <property type="project" value="UniProtKB-UniRule"/>
</dbReference>
<dbReference type="GO" id="GO:0008654">
    <property type="term" value="P:phospholipid biosynthetic process"/>
    <property type="evidence" value="ECO:0007669"/>
    <property type="project" value="UniProtKB-KW"/>
</dbReference>
<dbReference type="Gene3D" id="3.40.718.10">
    <property type="entry name" value="Isopropylmalate Dehydrogenase"/>
    <property type="match status" value="1"/>
</dbReference>
<dbReference type="HAMAP" id="MF_00019">
    <property type="entry name" value="PlsX"/>
    <property type="match status" value="1"/>
</dbReference>
<dbReference type="InterPro" id="IPR003664">
    <property type="entry name" value="FA_synthesis"/>
</dbReference>
<dbReference type="InterPro" id="IPR012281">
    <property type="entry name" value="Phospholipid_synth_PlsX-like"/>
</dbReference>
<dbReference type="NCBIfam" id="TIGR00182">
    <property type="entry name" value="plsX"/>
    <property type="match status" value="1"/>
</dbReference>
<dbReference type="PANTHER" id="PTHR30100">
    <property type="entry name" value="FATTY ACID/PHOSPHOLIPID SYNTHESIS PROTEIN PLSX"/>
    <property type="match status" value="1"/>
</dbReference>
<dbReference type="PANTHER" id="PTHR30100:SF1">
    <property type="entry name" value="PHOSPHATE ACYLTRANSFERASE"/>
    <property type="match status" value="1"/>
</dbReference>
<dbReference type="Pfam" id="PF02504">
    <property type="entry name" value="FA_synthesis"/>
    <property type="match status" value="1"/>
</dbReference>
<dbReference type="PIRSF" id="PIRSF002465">
    <property type="entry name" value="Phsphlp_syn_PlsX"/>
    <property type="match status" value="1"/>
</dbReference>
<dbReference type="SUPFAM" id="SSF53659">
    <property type="entry name" value="Isocitrate/Isopropylmalate dehydrogenase-like"/>
    <property type="match status" value="1"/>
</dbReference>
<protein>
    <recommendedName>
        <fullName evidence="1">Phosphate acyltransferase</fullName>
        <ecNumber evidence="1">2.3.1.274</ecNumber>
    </recommendedName>
    <alternativeName>
        <fullName evidence="1">Acyl-ACP phosphotransacylase</fullName>
    </alternativeName>
    <alternativeName>
        <fullName evidence="1">Acyl-[acyl-carrier-protein]--phosphate acyltransferase</fullName>
    </alternativeName>
    <alternativeName>
        <fullName evidence="1">Phosphate-acyl-ACP acyltransferase</fullName>
    </alternativeName>
</protein>
<evidence type="ECO:0000255" key="1">
    <source>
        <dbReference type="HAMAP-Rule" id="MF_00019"/>
    </source>
</evidence>
<keyword id="KW-0963">Cytoplasm</keyword>
<keyword id="KW-0444">Lipid biosynthesis</keyword>
<keyword id="KW-0443">Lipid metabolism</keyword>
<keyword id="KW-0594">Phospholipid biosynthesis</keyword>
<keyword id="KW-1208">Phospholipid metabolism</keyword>
<keyword id="KW-1185">Reference proteome</keyword>
<keyword id="KW-0808">Transferase</keyword>
<sequence>MKIAVDAMGGDYAPDEIVKGIELARDAYPDLEFLLYGQTAKVQPLLQNTTRIELVDAPEVIAMEDEPVRAVRRKKQSSIVLAATAVREGQADAFFSAGNTGAVLAAGLLIIGRIKGIERPGLTTTLPVLQRPDQSSFVMLDVGANADTKPFNVVQYAIMGQYYAQSVMHVDNPRIGLLNNGTEADKGDMAHRAIHDALANMAEINFVGNVESRELLNGAADVVVTDGFTGNATLKAVEGTALSMLKLIKGEIMSGGLGGKIGASMLKPVFRQVRSAMDYSQYGGAVLLGLKAPVVKTHGSTKAETVKNTIGQIQELLASHSADQLGTYFAEHSDEMAALKENLKA</sequence>